<comment type="function">
    <text evidence="1 2">Acts as a nucleation-promoting factor at the surface of endosomes, where it recruits and activates the Arp2/3 complex to induce actin polymerization, playing a key role in the fission of tubules that serve as transport intermediates during endosome sorting.</text>
</comment>
<comment type="subunit">
    <text evidence="1 2">Component of the WASH complex.</text>
</comment>
<comment type="subcellular location">
    <subcellularLocation>
        <location evidence="1">Early endosome membrane</location>
    </subcellularLocation>
    <subcellularLocation>
        <location evidence="3">Recycling endosome membrane</location>
    </subcellularLocation>
</comment>
<comment type="domain">
    <text evidence="2">The VCA (verprolin, cofilin, acidic) domain promotes actin polymerization by the Arp2/3 complex in vitro.</text>
</comment>
<comment type="similarity">
    <text evidence="6">Belongs to the WASH1 family.</text>
</comment>
<accession>Q5ZKA6</accession>
<protein>
    <recommendedName>
        <fullName evidence="1">WASH complex subunit 1</fullName>
    </recommendedName>
    <alternativeName>
        <fullName>WAS protein family homolog 1</fullName>
    </alternativeName>
</protein>
<evidence type="ECO:0000250" key="1">
    <source>
        <dbReference type="UniProtKB" id="A8K0Z3"/>
    </source>
</evidence>
<evidence type="ECO:0000250" key="2">
    <source>
        <dbReference type="UniProtKB" id="C4AMC7"/>
    </source>
</evidence>
<evidence type="ECO:0000250" key="3">
    <source>
        <dbReference type="UniProtKB" id="Q8VDD8"/>
    </source>
</evidence>
<evidence type="ECO:0000255" key="4">
    <source>
        <dbReference type="PROSITE-ProRule" id="PRU00406"/>
    </source>
</evidence>
<evidence type="ECO:0000256" key="5">
    <source>
        <dbReference type="SAM" id="MobiDB-lite"/>
    </source>
</evidence>
<evidence type="ECO:0000305" key="6"/>
<proteinExistence type="evidence at transcript level"/>
<reference key="1">
    <citation type="journal article" date="2005" name="Genome Biol.">
        <title>Full-length cDNAs from chicken bursal lymphocytes to facilitate gene function analysis.</title>
        <authorList>
            <person name="Caldwell R.B."/>
            <person name="Kierzek A.M."/>
            <person name="Arakawa H."/>
            <person name="Bezzubov Y."/>
            <person name="Zaim J."/>
            <person name="Fiedler P."/>
            <person name="Kutter S."/>
            <person name="Blagodatski A."/>
            <person name="Kostovska D."/>
            <person name="Koter M."/>
            <person name="Plachy J."/>
            <person name="Carninci P."/>
            <person name="Hayashizaki Y."/>
            <person name="Buerstedde J.-M."/>
        </authorList>
    </citation>
    <scope>NUCLEOTIDE SEQUENCE [LARGE SCALE MRNA]</scope>
    <source>
        <strain>CB</strain>
        <tissue>Bursa of Fabricius</tissue>
    </source>
</reference>
<feature type="chain" id="PRO_0000390965" description="WASH complex subunit 1">
    <location>
        <begin position="1"/>
        <end position="476"/>
    </location>
</feature>
<feature type="domain" description="WH2" evidence="4">
    <location>
        <begin position="366"/>
        <end position="388"/>
    </location>
</feature>
<feature type="region of interest" description="Required for WASH complex assembly" evidence="2">
    <location>
        <begin position="1"/>
        <end position="54"/>
    </location>
</feature>
<feature type="region of interest" description="Disordered" evidence="5">
    <location>
        <begin position="273"/>
        <end position="412"/>
    </location>
</feature>
<feature type="region of interest" description="VCA" evidence="2">
    <location>
        <begin position="354"/>
        <end position="476"/>
    </location>
</feature>
<feature type="region of interest" description="Disordered" evidence="5">
    <location>
        <begin position="427"/>
        <end position="476"/>
    </location>
</feature>
<feature type="compositionally biased region" description="Polar residues" evidence="5">
    <location>
        <begin position="284"/>
        <end position="296"/>
    </location>
</feature>
<feature type="compositionally biased region" description="Pro residues" evidence="5">
    <location>
        <begin position="302"/>
        <end position="333"/>
    </location>
</feature>
<feature type="compositionally biased region" description="Basic and acidic residues" evidence="5">
    <location>
        <begin position="387"/>
        <end position="403"/>
    </location>
</feature>
<feature type="compositionally biased region" description="Acidic residues" evidence="5">
    <location>
        <begin position="467"/>
        <end position="476"/>
    </location>
</feature>
<name>WASH1_CHICK</name>
<keyword id="KW-0009">Actin-binding</keyword>
<keyword id="KW-0967">Endosome</keyword>
<keyword id="KW-0472">Membrane</keyword>
<keyword id="KW-0653">Protein transport</keyword>
<keyword id="KW-1185">Reference proteome</keyword>
<keyword id="KW-0813">Transport</keyword>
<dbReference type="EMBL" id="AJ720178">
    <property type="protein sequence ID" value="CAG31837.1"/>
    <property type="molecule type" value="mRNA"/>
</dbReference>
<dbReference type="RefSeq" id="NP_001006245.1">
    <property type="nucleotide sequence ID" value="NM_001006245.1"/>
</dbReference>
<dbReference type="SMR" id="Q5ZKA6"/>
<dbReference type="FunCoup" id="Q5ZKA6">
    <property type="interactions" value="146"/>
</dbReference>
<dbReference type="STRING" id="9031.ENSGALP00000066858"/>
<dbReference type="PaxDb" id="9031-ENSGALP00000029912"/>
<dbReference type="GeneID" id="418145"/>
<dbReference type="KEGG" id="gga:418145"/>
<dbReference type="CTD" id="100287171"/>
<dbReference type="VEuPathDB" id="HostDB:geneid_418145"/>
<dbReference type="eggNOG" id="ENOG502QSX3">
    <property type="taxonomic scope" value="Eukaryota"/>
</dbReference>
<dbReference type="InParanoid" id="Q5ZKA6"/>
<dbReference type="OrthoDB" id="307871at2759"/>
<dbReference type="PhylomeDB" id="Q5ZKA6"/>
<dbReference type="PRO" id="PR:Q5ZKA6"/>
<dbReference type="Proteomes" id="UP000000539">
    <property type="component" value="Unassembled WGS sequence"/>
</dbReference>
<dbReference type="GO" id="GO:0005829">
    <property type="term" value="C:cytosol"/>
    <property type="evidence" value="ECO:0007669"/>
    <property type="project" value="GOC"/>
</dbReference>
<dbReference type="GO" id="GO:0005769">
    <property type="term" value="C:early endosome"/>
    <property type="evidence" value="ECO:0000250"/>
    <property type="project" value="UniProtKB"/>
</dbReference>
<dbReference type="GO" id="GO:0031901">
    <property type="term" value="C:early endosome membrane"/>
    <property type="evidence" value="ECO:0007669"/>
    <property type="project" value="UniProtKB-SubCell"/>
</dbReference>
<dbReference type="GO" id="GO:0055037">
    <property type="term" value="C:recycling endosome"/>
    <property type="evidence" value="ECO:0000250"/>
    <property type="project" value="UniProtKB"/>
</dbReference>
<dbReference type="GO" id="GO:0055038">
    <property type="term" value="C:recycling endosome membrane"/>
    <property type="evidence" value="ECO:0007669"/>
    <property type="project" value="UniProtKB-SubCell"/>
</dbReference>
<dbReference type="GO" id="GO:0071203">
    <property type="term" value="C:WASH complex"/>
    <property type="evidence" value="ECO:0000250"/>
    <property type="project" value="UniProtKB"/>
</dbReference>
<dbReference type="GO" id="GO:0003779">
    <property type="term" value="F:actin binding"/>
    <property type="evidence" value="ECO:0007669"/>
    <property type="project" value="UniProtKB-KW"/>
</dbReference>
<dbReference type="GO" id="GO:0043014">
    <property type="term" value="F:alpha-tubulin binding"/>
    <property type="evidence" value="ECO:0000250"/>
    <property type="project" value="UniProtKB"/>
</dbReference>
<dbReference type="GO" id="GO:0043015">
    <property type="term" value="F:gamma-tubulin binding"/>
    <property type="evidence" value="ECO:0000318"/>
    <property type="project" value="GO_Central"/>
</dbReference>
<dbReference type="GO" id="GO:0034314">
    <property type="term" value="P:Arp2/3 complex-mediated actin nucleation"/>
    <property type="evidence" value="ECO:0000250"/>
    <property type="project" value="UniProtKB"/>
</dbReference>
<dbReference type="GO" id="GO:0032456">
    <property type="term" value="P:endocytic recycling"/>
    <property type="evidence" value="ECO:0000318"/>
    <property type="project" value="GO_Central"/>
</dbReference>
<dbReference type="GO" id="GO:0016197">
    <property type="term" value="P:endosomal transport"/>
    <property type="evidence" value="ECO:0000250"/>
    <property type="project" value="UniProtKB"/>
</dbReference>
<dbReference type="GO" id="GO:0006887">
    <property type="term" value="P:exocytosis"/>
    <property type="evidence" value="ECO:0000318"/>
    <property type="project" value="GO_Central"/>
</dbReference>
<dbReference type="GO" id="GO:0015031">
    <property type="term" value="P:protein transport"/>
    <property type="evidence" value="ECO:0007669"/>
    <property type="project" value="UniProtKB-KW"/>
</dbReference>
<dbReference type="GO" id="GO:0042147">
    <property type="term" value="P:retrograde transport, endosome to Golgi"/>
    <property type="evidence" value="ECO:0000250"/>
    <property type="project" value="UniProtKB"/>
</dbReference>
<dbReference type="InterPro" id="IPR028290">
    <property type="entry name" value="WASH1"/>
</dbReference>
<dbReference type="InterPro" id="IPR021854">
    <property type="entry name" value="WASH1_WAHD"/>
</dbReference>
<dbReference type="InterPro" id="IPR003124">
    <property type="entry name" value="WH2_dom"/>
</dbReference>
<dbReference type="PANTHER" id="PTHR23331">
    <property type="entry name" value="CXYORF1"/>
    <property type="match status" value="1"/>
</dbReference>
<dbReference type="PANTHER" id="PTHR23331:SF5">
    <property type="entry name" value="WAS PROTEIN FAMILY HOMOLOG 2-RELATED"/>
    <property type="match status" value="1"/>
</dbReference>
<dbReference type="Pfam" id="PF11945">
    <property type="entry name" value="WASH_WAHD"/>
    <property type="match status" value="1"/>
</dbReference>
<dbReference type="PROSITE" id="PS51082">
    <property type="entry name" value="WH2"/>
    <property type="match status" value="1"/>
</dbReference>
<gene>
    <name evidence="1" type="primary">WASHC1</name>
    <name type="synonym">WASH1</name>
    <name type="ORF">RCJMB04_12b7</name>
</gene>
<organism>
    <name type="scientific">Gallus gallus</name>
    <name type="common">Chicken</name>
    <dbReference type="NCBI Taxonomy" id="9031"/>
    <lineage>
        <taxon>Eukaryota</taxon>
        <taxon>Metazoa</taxon>
        <taxon>Chordata</taxon>
        <taxon>Craniata</taxon>
        <taxon>Vertebrata</taxon>
        <taxon>Euteleostomi</taxon>
        <taxon>Archelosauria</taxon>
        <taxon>Archosauria</taxon>
        <taxon>Dinosauria</taxon>
        <taxon>Saurischia</taxon>
        <taxon>Theropoda</taxon>
        <taxon>Coelurosauria</taxon>
        <taxon>Aves</taxon>
        <taxon>Neognathae</taxon>
        <taxon>Galloanserae</taxon>
        <taxon>Galliformes</taxon>
        <taxon>Phasianidae</taxon>
        <taxon>Phasianinae</taxon>
        <taxon>Gallus</taxon>
    </lineage>
</organism>
<sequence>MTTVAQKHFLEGQTYSVPLIQPDLRREEAVQQVADALQYLQKVSGDIFNRISQRVETSRAQLQAISERVTLAQAKIEKIKGSKKAIKVFSSAKYPAPERLQEYCSIFAGAEDPSKQKWPRHKIQSKHRMLDEKSLQEKLKYFPVCVNTKIHQEDDAEEGLGSLPRNISSLSSLLLFNTTENLYKKYVFLDPLAGAVTKTHVALETETEEKLFDAPLSITERGQLDRQVAENYFYVPDLGQVPEIDVPSYLPDLPGIAADLMYSADLGPGIAPSAPSSAIPELPTFSTESVEPSQADLQDPGLLPPPPPPPPPPPPVMPTTVPPPPPLPQPTAPSEPARTASEDSSKTVPAASVQGAPKEVVNPSTGRASLLESIRQAGGIGKANLRSVKERKLEKKKQKEQEQVRATGQGGDLMSDLFNKLVLRRKGISGKGPGASANPDAPGSPAGAFARMSDSIPPLPPPQQPPGEEDEDDWES</sequence>